<comment type="function">
    <text evidence="4">Might be involved in the organization and polarity of the actin cytoskeleton. Interacts with the barbed end of actin filaments and nucleates actin-filament polymerization in vitro. Seems to play a role in cytokinesis.</text>
</comment>
<comment type="subcellular location">
    <subcellularLocation>
        <location evidence="5">Membrane</location>
        <topology evidence="5">Multi-pass membrane protein</topology>
    </subcellularLocation>
</comment>
<comment type="tissue specificity">
    <text evidence="4">Expressed in the endosperm. Localizes to the cell plate, a plant-specific membranous component that is assembled at the plane of cell division.</text>
</comment>
<comment type="similarity">
    <text evidence="5">Belongs to the formin-like family. Class-I subfamily.</text>
</comment>
<protein>
    <recommendedName>
        <fullName>Formin-like protein 5</fullName>
        <shortName>AtFH5</shortName>
        <shortName>AtFORMIN-5</shortName>
    </recommendedName>
    <alternativeName>
        <fullName>Formin homology 2 domain-containing protein 5</fullName>
    </alternativeName>
</protein>
<proteinExistence type="evidence at transcript level"/>
<feature type="chain" id="PRO_0000308530" description="Formin-like protein 5">
    <location>
        <begin position="1"/>
        <end position="900"/>
    </location>
</feature>
<feature type="transmembrane region" description="Helical; Signal-anchor" evidence="1">
    <location>
        <begin position="15"/>
        <end position="32"/>
    </location>
</feature>
<feature type="transmembrane region" description="Helical" evidence="1">
    <location>
        <begin position="214"/>
        <end position="234"/>
    </location>
</feature>
<feature type="domain" description="FH2" evidence="2">
    <location>
        <begin position="433"/>
        <end position="865"/>
    </location>
</feature>
<feature type="region of interest" description="Disordered" evidence="3">
    <location>
        <begin position="136"/>
        <end position="209"/>
    </location>
</feature>
<feature type="region of interest" description="Disordered" evidence="3">
    <location>
        <begin position="273"/>
        <end position="440"/>
    </location>
</feature>
<feature type="region of interest" description="Disordered" evidence="3">
    <location>
        <begin position="849"/>
        <end position="900"/>
    </location>
</feature>
<feature type="compositionally biased region" description="Pro residues" evidence="3">
    <location>
        <begin position="160"/>
        <end position="173"/>
    </location>
</feature>
<feature type="compositionally biased region" description="Polar residues" evidence="3">
    <location>
        <begin position="281"/>
        <end position="304"/>
    </location>
</feature>
<feature type="compositionally biased region" description="Basic and acidic residues" evidence="3">
    <location>
        <begin position="307"/>
        <end position="316"/>
    </location>
</feature>
<feature type="compositionally biased region" description="Low complexity" evidence="3">
    <location>
        <begin position="359"/>
        <end position="368"/>
    </location>
</feature>
<feature type="compositionally biased region" description="Pro residues" evidence="3">
    <location>
        <begin position="369"/>
        <end position="429"/>
    </location>
</feature>
<feature type="compositionally biased region" description="Polar residues" evidence="3">
    <location>
        <begin position="860"/>
        <end position="876"/>
    </location>
</feature>
<feature type="sequence conflict" description="In Ref. 1; AAS93430/AAT37554." evidence="5" ref="1">
    <original>Q</original>
    <variation>L</variation>
    <location>
        <position position="65"/>
    </location>
</feature>
<feature type="sequence conflict" description="In Ref. 1; AAS93430/AAT37554." evidence="5" ref="1">
    <original>S</original>
    <variation>A</variation>
    <location>
        <position position="175"/>
    </location>
</feature>
<feature type="sequence conflict" description="In Ref. 1; AAS93430/AAT37554." evidence="5" ref="1">
    <original>Q</original>
    <variation>P</variation>
    <location>
        <position position="378"/>
    </location>
</feature>
<feature type="sequence conflict" description="In Ref. 1; AAS93430/AAT37554." evidence="5" ref="1">
    <original>K</original>
    <variation>T</variation>
    <location>
        <position position="613"/>
    </location>
</feature>
<feature type="sequence conflict" description="In Ref. 4; AAK68741/AAM91323." evidence="5" ref="4">
    <original>E</original>
    <variation>G</variation>
    <location>
        <position position="777"/>
    </location>
</feature>
<evidence type="ECO:0000255" key="1"/>
<evidence type="ECO:0000255" key="2">
    <source>
        <dbReference type="PROSITE-ProRule" id="PRU00774"/>
    </source>
</evidence>
<evidence type="ECO:0000256" key="3">
    <source>
        <dbReference type="SAM" id="MobiDB-lite"/>
    </source>
</evidence>
<evidence type="ECO:0000269" key="4">
    <source>
    </source>
</evidence>
<evidence type="ECO:0000305" key="5"/>
<keyword id="KW-0472">Membrane</keyword>
<keyword id="KW-1185">Reference proteome</keyword>
<keyword id="KW-0735">Signal-anchor</keyword>
<keyword id="KW-0812">Transmembrane</keyword>
<keyword id="KW-1133">Transmembrane helix</keyword>
<name>FH5_ARATH</name>
<sequence>MVGMIRGGMGDQNWSRLVFWLILFSGLLVITLEENPEKDEIFLSQFMAPSTGQVNEHMEETSWAQRCWQDSDCVKEAVAEFNLCFPGSKDSRELFGLNHTNLKQTLLDCIQEKGKLNGHNPKYLELLSSMLDIPRRNLATKPGSSPSPSPSRPPKRSRGPPRPPTRPKSPPPRKSSFPPSRSPPPPPAKKNASKNSTSAPVSPAKKKEDHEKTIIIAVVVTAVSTFLLAALFFLCCSRVCGNGSGGRKNDERPLLSLSSSDYSVGSSINYGGSVKGDKQGHQSFNIYSNQGKMSSFDGSNSDTSDSLEERLSHEGLRNNSITNHGLPPLKPPPGRTASVLSGKSFSGKVEPLPPEPPKFLKVSSKKASAPPPPVPAPQMPSSAGPPRPPPPAPPPGSGGPKPPPPPGPKGPRPPPPMSLGPKAPRPPSGPADALDDDAPKTKLKPFFWDKVQANPEHSMVWNDIRSGSFQFNEEMIESLFGYAAADKNKNDKKGSSGQAALPQFVQILEPKKGQNLSILLRALNATTEEVCDALREGNELPVEFIQTLLKMAPTPEEELKLRLYCGEIAQLGSAERFLKAVVDIPFAFKRLEALLFMCTLHEEMAFVKESFQKLEVACKELRGSRLFLKLLEAVLKTGNRMNDGTFRGGAQAFKLDTLLKLADVKGTDGKTTLLHFVVQEIIRTEGVRAARTIRESQSFSSVKTEDLLVEETSEESEENYRNLGLEKVSGLSSELEHVKKSANIDADGLTGTVLKMGHALSKARDFVNSEMKSSGEESGFREALEDFIQNAEGSIMSILEEEKRIMALVKSTGDYFHGKAGKDEGLRLFVIVRDFLIILDKSCKEVREARGRPVRMARKQGSTASASSETPRQTPSLDPRQKLFPAITERRVDQSSSDSD</sequence>
<gene>
    <name type="primary">FH5</name>
    <name type="synonym">FHP5</name>
    <name type="ordered locus">At5g54650</name>
    <name type="ORF">MRB17.15</name>
</gene>
<organism>
    <name type="scientific">Arabidopsis thaliana</name>
    <name type="common">Mouse-ear cress</name>
    <dbReference type="NCBI Taxonomy" id="3702"/>
    <lineage>
        <taxon>Eukaryota</taxon>
        <taxon>Viridiplantae</taxon>
        <taxon>Streptophyta</taxon>
        <taxon>Embryophyta</taxon>
        <taxon>Tracheophyta</taxon>
        <taxon>Spermatophyta</taxon>
        <taxon>Magnoliopsida</taxon>
        <taxon>eudicotyledons</taxon>
        <taxon>Gunneridae</taxon>
        <taxon>Pentapetalae</taxon>
        <taxon>rosids</taxon>
        <taxon>malvids</taxon>
        <taxon>Brassicales</taxon>
        <taxon>Brassicaceae</taxon>
        <taxon>Camelineae</taxon>
        <taxon>Arabidopsis</taxon>
    </lineage>
</organism>
<accession>Q94B77</accession>
<accession>Q0WPT9</accession>
<accession>Q6PSU8</accession>
<accession>Q9FIU0</accession>
<dbReference type="EMBL" id="AY581683">
    <property type="protein sequence ID" value="AAS93430.1"/>
    <property type="molecule type" value="mRNA"/>
</dbReference>
<dbReference type="EMBL" id="AY611066">
    <property type="protein sequence ID" value="AAT37554.1"/>
    <property type="molecule type" value="Genomic_DNA"/>
</dbReference>
<dbReference type="EMBL" id="AB016879">
    <property type="protein sequence ID" value="BAB09344.1"/>
    <property type="molecule type" value="Genomic_DNA"/>
</dbReference>
<dbReference type="EMBL" id="CP002688">
    <property type="protein sequence ID" value="AED96522.1"/>
    <property type="molecule type" value="Genomic_DNA"/>
</dbReference>
<dbReference type="EMBL" id="CP002688">
    <property type="protein sequence ID" value="AED96523.1"/>
    <property type="molecule type" value="Genomic_DNA"/>
</dbReference>
<dbReference type="EMBL" id="AY042801">
    <property type="protein sequence ID" value="AAK68741.1"/>
    <property type="molecule type" value="mRNA"/>
</dbReference>
<dbReference type="EMBL" id="AY128923">
    <property type="protein sequence ID" value="AAM91323.1"/>
    <property type="molecule type" value="mRNA"/>
</dbReference>
<dbReference type="EMBL" id="AK228971">
    <property type="protein sequence ID" value="BAF00860.1"/>
    <property type="molecule type" value="mRNA"/>
</dbReference>
<dbReference type="RefSeq" id="NP_200276.1">
    <property type="nucleotide sequence ID" value="NM_124846.2"/>
</dbReference>
<dbReference type="RefSeq" id="NP_851191.1">
    <property type="nucleotide sequence ID" value="NM_180860.2"/>
</dbReference>
<dbReference type="SMR" id="Q94B77"/>
<dbReference type="BioGRID" id="20798">
    <property type="interactions" value="1"/>
</dbReference>
<dbReference type="FunCoup" id="Q94B77">
    <property type="interactions" value="253"/>
</dbReference>
<dbReference type="STRING" id="3702.Q94B77"/>
<dbReference type="iPTMnet" id="Q94B77"/>
<dbReference type="PaxDb" id="3702-AT5G54650.1"/>
<dbReference type="ProteomicsDB" id="228904"/>
<dbReference type="EnsemblPlants" id="AT5G54650.1">
    <property type="protein sequence ID" value="AT5G54650.1"/>
    <property type="gene ID" value="AT5G54650"/>
</dbReference>
<dbReference type="EnsemblPlants" id="AT5G54650.2">
    <property type="protein sequence ID" value="AT5G54650.2"/>
    <property type="gene ID" value="AT5G54650"/>
</dbReference>
<dbReference type="GeneID" id="835554"/>
<dbReference type="Gramene" id="AT5G54650.1">
    <property type="protein sequence ID" value="AT5G54650.1"/>
    <property type="gene ID" value="AT5G54650"/>
</dbReference>
<dbReference type="Gramene" id="AT5G54650.2">
    <property type="protein sequence ID" value="AT5G54650.2"/>
    <property type="gene ID" value="AT5G54650"/>
</dbReference>
<dbReference type="KEGG" id="ath:AT5G54650"/>
<dbReference type="Araport" id="AT5G54650"/>
<dbReference type="TAIR" id="AT5G54650">
    <property type="gene designation" value="FH5"/>
</dbReference>
<dbReference type="eggNOG" id="KOG1922">
    <property type="taxonomic scope" value="Eukaryota"/>
</dbReference>
<dbReference type="HOGENOM" id="CLU_007699_1_1_1"/>
<dbReference type="InParanoid" id="Q94B77"/>
<dbReference type="OMA" id="MEETSWA"/>
<dbReference type="PhylomeDB" id="Q94B77"/>
<dbReference type="PRO" id="PR:Q94B77"/>
<dbReference type="Proteomes" id="UP000006548">
    <property type="component" value="Chromosome 5"/>
</dbReference>
<dbReference type="ExpressionAtlas" id="Q94B77">
    <property type="expression patterns" value="baseline and differential"/>
</dbReference>
<dbReference type="GO" id="GO:0005737">
    <property type="term" value="C:cytoplasm"/>
    <property type="evidence" value="ECO:0007005"/>
    <property type="project" value="TAIR"/>
</dbReference>
<dbReference type="GO" id="GO:0016020">
    <property type="term" value="C:membrane"/>
    <property type="evidence" value="ECO:0007669"/>
    <property type="project" value="UniProtKB-SubCell"/>
</dbReference>
<dbReference type="GO" id="GO:0009524">
    <property type="term" value="C:phragmoplast"/>
    <property type="evidence" value="ECO:0007005"/>
    <property type="project" value="TAIR"/>
</dbReference>
<dbReference type="GO" id="GO:0003779">
    <property type="term" value="F:actin binding"/>
    <property type="evidence" value="ECO:0000250"/>
    <property type="project" value="TAIR"/>
</dbReference>
<dbReference type="GO" id="GO:0051015">
    <property type="term" value="F:actin filament binding"/>
    <property type="evidence" value="ECO:0007669"/>
    <property type="project" value="InterPro"/>
</dbReference>
<dbReference type="GO" id="GO:0030041">
    <property type="term" value="P:actin filament polymerization"/>
    <property type="evidence" value="ECO:0000314"/>
    <property type="project" value="TAIR"/>
</dbReference>
<dbReference type="GO" id="GO:0045010">
    <property type="term" value="P:actin nucleation"/>
    <property type="evidence" value="ECO:0000314"/>
    <property type="project" value="TAIR"/>
</dbReference>
<dbReference type="GO" id="GO:0009960">
    <property type="term" value="P:endosperm development"/>
    <property type="evidence" value="ECO:0000315"/>
    <property type="project" value="TAIR"/>
</dbReference>
<dbReference type="GO" id="GO:0048317">
    <property type="term" value="P:seed morphogenesis"/>
    <property type="evidence" value="ECO:0000316"/>
    <property type="project" value="TAIR"/>
</dbReference>
<dbReference type="Gene3D" id="1.20.58.2220">
    <property type="entry name" value="Formin, FH2 domain"/>
    <property type="match status" value="1"/>
</dbReference>
<dbReference type="InterPro" id="IPR015425">
    <property type="entry name" value="FH2_Formin"/>
</dbReference>
<dbReference type="InterPro" id="IPR042201">
    <property type="entry name" value="FH2_Formin_sf"/>
</dbReference>
<dbReference type="InterPro" id="IPR027643">
    <property type="entry name" value="Formin-like_plant"/>
</dbReference>
<dbReference type="PANTHER" id="PTHR23213:SF269">
    <property type="entry name" value="FORMIN-LIKE PROTEIN 5"/>
    <property type="match status" value="1"/>
</dbReference>
<dbReference type="PANTHER" id="PTHR23213">
    <property type="entry name" value="FORMIN-RELATED"/>
    <property type="match status" value="1"/>
</dbReference>
<dbReference type="Pfam" id="PF02181">
    <property type="entry name" value="FH2"/>
    <property type="match status" value="1"/>
</dbReference>
<dbReference type="PRINTS" id="PR01217">
    <property type="entry name" value="PRICHEXTENSN"/>
</dbReference>
<dbReference type="SMART" id="SM00498">
    <property type="entry name" value="FH2"/>
    <property type="match status" value="1"/>
</dbReference>
<dbReference type="SUPFAM" id="SSF101447">
    <property type="entry name" value="Formin homology 2 domain (FH2 domain)"/>
    <property type="match status" value="1"/>
</dbReference>
<dbReference type="PROSITE" id="PS51444">
    <property type="entry name" value="FH2"/>
    <property type="match status" value="1"/>
</dbReference>
<reference key="1">
    <citation type="journal article" date="2005" name="Nat. Cell Biol.">
        <title>Plant formin AtFH5 is an evolutionarily conserved actin nucleator involved in cytokinesis.</title>
        <authorList>
            <person name="Ingouff M."/>
            <person name="Fitz Gerald J.N."/>
            <person name="Guerin C."/>
            <person name="Robert H."/>
            <person name="Sorensen M.B."/>
            <person name="Van Damme D."/>
            <person name="Geelen D."/>
            <person name="Blanchoin L."/>
            <person name="Berger F."/>
        </authorList>
    </citation>
    <scope>NUCLEOTIDE SEQUENCE [GENOMIC DNA / MRNA]</scope>
    <scope>TISSUE SPECIFICITY</scope>
    <scope>FUNCTION</scope>
    <source>
        <strain>cv. C24</strain>
    </source>
</reference>
<reference key="2">
    <citation type="journal article" date="1998" name="DNA Res.">
        <title>Structural analysis of Arabidopsis thaliana chromosome 5. VII. Sequence features of the regions of 1,013,767 bp covered by sixteen physically assigned P1 and TAC clones.</title>
        <authorList>
            <person name="Nakamura Y."/>
            <person name="Sato S."/>
            <person name="Asamizu E."/>
            <person name="Kaneko T."/>
            <person name="Kotani H."/>
            <person name="Miyajima N."/>
            <person name="Tabata S."/>
        </authorList>
    </citation>
    <scope>NUCLEOTIDE SEQUENCE [LARGE SCALE GENOMIC DNA]</scope>
    <source>
        <strain>cv. Columbia</strain>
    </source>
</reference>
<reference key="3">
    <citation type="journal article" date="2017" name="Plant J.">
        <title>Araport11: a complete reannotation of the Arabidopsis thaliana reference genome.</title>
        <authorList>
            <person name="Cheng C.Y."/>
            <person name="Krishnakumar V."/>
            <person name="Chan A.P."/>
            <person name="Thibaud-Nissen F."/>
            <person name="Schobel S."/>
            <person name="Town C.D."/>
        </authorList>
    </citation>
    <scope>GENOME REANNOTATION</scope>
    <source>
        <strain>cv. Columbia</strain>
    </source>
</reference>
<reference key="4">
    <citation type="journal article" date="2003" name="Science">
        <title>Empirical analysis of transcriptional activity in the Arabidopsis genome.</title>
        <authorList>
            <person name="Yamada K."/>
            <person name="Lim J."/>
            <person name="Dale J.M."/>
            <person name="Chen H."/>
            <person name="Shinn P."/>
            <person name="Palm C.J."/>
            <person name="Southwick A.M."/>
            <person name="Wu H.C."/>
            <person name="Kim C.J."/>
            <person name="Nguyen M."/>
            <person name="Pham P.K."/>
            <person name="Cheuk R.F."/>
            <person name="Karlin-Newmann G."/>
            <person name="Liu S.X."/>
            <person name="Lam B."/>
            <person name="Sakano H."/>
            <person name="Wu T."/>
            <person name="Yu G."/>
            <person name="Miranda M."/>
            <person name="Quach H.L."/>
            <person name="Tripp M."/>
            <person name="Chang C.H."/>
            <person name="Lee J.M."/>
            <person name="Toriumi M.J."/>
            <person name="Chan M.M."/>
            <person name="Tang C.C."/>
            <person name="Onodera C.S."/>
            <person name="Deng J.M."/>
            <person name="Akiyama K."/>
            <person name="Ansari Y."/>
            <person name="Arakawa T."/>
            <person name="Banh J."/>
            <person name="Banno F."/>
            <person name="Bowser L."/>
            <person name="Brooks S.Y."/>
            <person name="Carninci P."/>
            <person name="Chao Q."/>
            <person name="Choy N."/>
            <person name="Enju A."/>
            <person name="Goldsmith A.D."/>
            <person name="Gurjal M."/>
            <person name="Hansen N.F."/>
            <person name="Hayashizaki Y."/>
            <person name="Johnson-Hopson C."/>
            <person name="Hsuan V.W."/>
            <person name="Iida K."/>
            <person name="Karnes M."/>
            <person name="Khan S."/>
            <person name="Koesema E."/>
            <person name="Ishida J."/>
            <person name="Jiang P.X."/>
            <person name="Jones T."/>
            <person name="Kawai J."/>
            <person name="Kamiya A."/>
            <person name="Meyers C."/>
            <person name="Nakajima M."/>
            <person name="Narusaka M."/>
            <person name="Seki M."/>
            <person name="Sakurai T."/>
            <person name="Satou M."/>
            <person name="Tamse R."/>
            <person name="Vaysberg M."/>
            <person name="Wallender E.K."/>
            <person name="Wong C."/>
            <person name="Yamamura Y."/>
            <person name="Yuan S."/>
            <person name="Shinozaki K."/>
            <person name="Davis R.W."/>
            <person name="Theologis A."/>
            <person name="Ecker J.R."/>
        </authorList>
    </citation>
    <scope>NUCLEOTIDE SEQUENCE [LARGE SCALE MRNA]</scope>
    <source>
        <strain>cv. Columbia</strain>
    </source>
</reference>
<reference key="5">
    <citation type="submission" date="2006-07" db="EMBL/GenBank/DDBJ databases">
        <title>Large-scale analysis of RIKEN Arabidopsis full-length (RAFL) cDNAs.</title>
        <authorList>
            <person name="Totoki Y."/>
            <person name="Seki M."/>
            <person name="Ishida J."/>
            <person name="Nakajima M."/>
            <person name="Enju A."/>
            <person name="Kamiya A."/>
            <person name="Narusaka M."/>
            <person name="Shin-i T."/>
            <person name="Nakagawa M."/>
            <person name="Sakamoto N."/>
            <person name="Oishi K."/>
            <person name="Kohara Y."/>
            <person name="Kobayashi M."/>
            <person name="Toyoda A."/>
            <person name="Sakaki Y."/>
            <person name="Sakurai T."/>
            <person name="Iida K."/>
            <person name="Akiyama K."/>
            <person name="Satou M."/>
            <person name="Toyoda T."/>
            <person name="Konagaya A."/>
            <person name="Carninci P."/>
            <person name="Kawai J."/>
            <person name="Hayashizaki Y."/>
            <person name="Shinozaki K."/>
        </authorList>
    </citation>
    <scope>NUCLEOTIDE SEQUENCE [LARGE SCALE MRNA] OF 1-204</scope>
    <source>
        <strain>cv. Columbia</strain>
    </source>
</reference>
<reference key="6">
    <citation type="journal article" date="2000" name="Genome Biol.">
        <title>Are plant formins integral membrane proteins?</title>
        <authorList>
            <person name="Cvrckova F."/>
        </authorList>
    </citation>
    <scope>GENE FAMILY ORGANIZATION</scope>
</reference>
<reference key="7">
    <citation type="journal article" date="2002" name="Trends Plant Sci.">
        <title>Formins: intermediates in signal-transduction cascades that affect cytoskeletal reorganization.</title>
        <authorList>
            <person name="Deeks M.J."/>
            <person name="Hussey P.J."/>
            <person name="Davies B."/>
        </authorList>
    </citation>
    <scope>GENE FAMILY ORGANIZATION</scope>
    <scope>NOMENCLATURE</scope>
</reference>
<reference key="8">
    <citation type="journal article" date="2004" name="BMC Genomics">
        <title>Formin homology 2 domains occur in multiple contexts in angiosperms.</title>
        <authorList>
            <person name="Cvrckova F."/>
            <person name="Novotny M."/>
            <person name="Pickova D."/>
            <person name="Zarsky V."/>
        </authorList>
    </citation>
    <scope>GENE FAMILY ORGANIZATION</scope>
    <scope>NOMENCLATURE</scope>
</reference>